<accession>B8CH81</accession>
<evidence type="ECO:0000255" key="1">
    <source>
        <dbReference type="HAMAP-Rule" id="MF_00413"/>
    </source>
</evidence>
<comment type="function">
    <text evidence="1">Sulfur carrier protein which probably makes part of a sulfur-relay system.</text>
</comment>
<comment type="subcellular location">
    <subcellularLocation>
        <location evidence="1">Cytoplasm</location>
    </subcellularLocation>
</comment>
<comment type="similarity">
    <text evidence="1">Belongs to the sulfur carrier protein TusA family.</text>
</comment>
<gene>
    <name evidence="1" type="primary">tusA</name>
    <name type="ordered locus">swp_0025</name>
</gene>
<reference key="1">
    <citation type="journal article" date="2008" name="PLoS ONE">
        <title>Environmental adaptation: genomic analysis of the piezotolerant and psychrotolerant deep-sea iron reducing bacterium Shewanella piezotolerans WP3.</title>
        <authorList>
            <person name="Wang F."/>
            <person name="Wang J."/>
            <person name="Jian H."/>
            <person name="Zhang B."/>
            <person name="Li S."/>
            <person name="Wang F."/>
            <person name="Zeng X."/>
            <person name="Gao L."/>
            <person name="Bartlett D.H."/>
            <person name="Yu J."/>
            <person name="Hu S."/>
            <person name="Xiao X."/>
        </authorList>
    </citation>
    <scope>NUCLEOTIDE SEQUENCE [LARGE SCALE GENOMIC DNA]</scope>
    <source>
        <strain>WP3 / JCM 13877</strain>
    </source>
</reference>
<dbReference type="EMBL" id="CP000472">
    <property type="protein sequence ID" value="ACJ26873.1"/>
    <property type="molecule type" value="Genomic_DNA"/>
</dbReference>
<dbReference type="RefSeq" id="WP_020910257.1">
    <property type="nucleotide sequence ID" value="NC_011566.1"/>
</dbReference>
<dbReference type="SMR" id="B8CH81"/>
<dbReference type="STRING" id="225849.swp_0025"/>
<dbReference type="KEGG" id="swp:swp_0025"/>
<dbReference type="eggNOG" id="COG0425">
    <property type="taxonomic scope" value="Bacteria"/>
</dbReference>
<dbReference type="HOGENOM" id="CLU_165255_5_0_6"/>
<dbReference type="OrthoDB" id="9797352at2"/>
<dbReference type="Proteomes" id="UP000000753">
    <property type="component" value="Chromosome"/>
</dbReference>
<dbReference type="GO" id="GO:0005737">
    <property type="term" value="C:cytoplasm"/>
    <property type="evidence" value="ECO:0007669"/>
    <property type="project" value="UniProtKB-SubCell"/>
</dbReference>
<dbReference type="GO" id="GO:0097163">
    <property type="term" value="F:sulfur carrier activity"/>
    <property type="evidence" value="ECO:0007669"/>
    <property type="project" value="UniProtKB-UniRule"/>
</dbReference>
<dbReference type="GO" id="GO:0002143">
    <property type="term" value="P:tRNA wobble position uridine thiolation"/>
    <property type="evidence" value="ECO:0007669"/>
    <property type="project" value="InterPro"/>
</dbReference>
<dbReference type="CDD" id="cd03423">
    <property type="entry name" value="SirA"/>
    <property type="match status" value="1"/>
</dbReference>
<dbReference type="Gene3D" id="3.30.110.40">
    <property type="entry name" value="TusA-like domain"/>
    <property type="match status" value="1"/>
</dbReference>
<dbReference type="HAMAP" id="MF_00413">
    <property type="entry name" value="Thiourid_synth_A"/>
    <property type="match status" value="1"/>
</dbReference>
<dbReference type="InterPro" id="IPR022931">
    <property type="entry name" value="Sulphur_carrier_TusA"/>
</dbReference>
<dbReference type="InterPro" id="IPR001455">
    <property type="entry name" value="TusA-like"/>
</dbReference>
<dbReference type="InterPro" id="IPR036868">
    <property type="entry name" value="TusA-like_sf"/>
</dbReference>
<dbReference type="NCBIfam" id="NF001423">
    <property type="entry name" value="PRK00299.1"/>
    <property type="match status" value="1"/>
</dbReference>
<dbReference type="PANTHER" id="PTHR33279:SF2">
    <property type="entry name" value="SULFUR CARRIER PROTEIN TUSA"/>
    <property type="match status" value="1"/>
</dbReference>
<dbReference type="PANTHER" id="PTHR33279">
    <property type="entry name" value="SULFUR CARRIER PROTEIN YEDF-RELATED"/>
    <property type="match status" value="1"/>
</dbReference>
<dbReference type="Pfam" id="PF01206">
    <property type="entry name" value="TusA"/>
    <property type="match status" value="1"/>
</dbReference>
<dbReference type="SUPFAM" id="SSF64307">
    <property type="entry name" value="SirA-like"/>
    <property type="match status" value="1"/>
</dbReference>
<dbReference type="PROSITE" id="PS01148">
    <property type="entry name" value="UPF0033"/>
    <property type="match status" value="1"/>
</dbReference>
<proteinExistence type="inferred from homology"/>
<organism>
    <name type="scientific">Shewanella piezotolerans (strain WP3 / JCM 13877)</name>
    <dbReference type="NCBI Taxonomy" id="225849"/>
    <lineage>
        <taxon>Bacteria</taxon>
        <taxon>Pseudomonadati</taxon>
        <taxon>Pseudomonadota</taxon>
        <taxon>Gammaproteobacteria</taxon>
        <taxon>Alteromonadales</taxon>
        <taxon>Shewanellaceae</taxon>
        <taxon>Shewanella</taxon>
    </lineage>
</organism>
<keyword id="KW-0963">Cytoplasm</keyword>
<feature type="chain" id="PRO_1000199932" description="Sulfur carrier protein TusA">
    <location>
        <begin position="1"/>
        <end position="81"/>
    </location>
</feature>
<feature type="active site" description="Cysteine persulfide intermediate" evidence="1">
    <location>
        <position position="19"/>
    </location>
</feature>
<sequence>MSDQFSNAQHQLDALGLRCPEPVMMVRKSVRRMDDGETLLIIADDPATTRDIPSFCEFMDHTLIASQTDATPYQYLIRKGL</sequence>
<protein>
    <recommendedName>
        <fullName evidence="1">Sulfur carrier protein TusA</fullName>
    </recommendedName>
</protein>
<name>TUSA_SHEPW</name>